<evidence type="ECO:0000250" key="1"/>
<evidence type="ECO:0000255" key="2"/>
<evidence type="ECO:0000256" key="3">
    <source>
        <dbReference type="SAM" id="MobiDB-lite"/>
    </source>
</evidence>
<evidence type="ECO:0000305" key="4"/>
<sequence>MVDDEDDITFDSPEEEIAHYREKYRQALDMLTDTRAELEEFQQSSKELEDEMEQELAANDKQQADLREKIKRLDAEKEEWRTKHIALQKMHSSTTSAMQREMDNLRSERDKTLVALRDLEMGNDELERNERVAISSLLDLESKYNRAIEEKTLLEQDLAQKDELETETQRLKDELREANEEISILKDQLARAIATPPSSVSTSSPIHDAACDLSRIHLSDDINASPLPPPVPSKNKSITPEGHSPRRGLSRSGTMSSIPVASPSTKRFSQQIPHSPSFSTLSRSTTSRNLAAAAGTPGSPALARSRSGIPQASPARGIVLASHQQTKSRGFKLLHDLQARLKATDDKLGGAKVPRRNVSNPASVFGVGKRVTSTTSTTSSTTTAPAPHARVTALAKDHNTTPTAQSQQFPGSGIMSPGWVLVGEGEGEDTPTGPWSMTLPAEPNSPLDPTFRSSSTTSNRSLPSRPGIPSPLASGSARSTTSGTAQRQAGQRPSSRLGLKASRRDSEARPLSPSMIPVPSFSSRPMSPDVYQPLRSATPTSGFSSFSASASTSNPPRPNSRTGKRNPIGRGPPPLSSSTRLHHQRSRQSLSGAGPTPTTGADKVERAKRGPRRSSLSNMDKPSLMSASSGSRTPSGRPTSVHVFRETPPPVPRIPSAILKESKVKK</sequence>
<feature type="chain" id="PRO_0000240223" description="Nuclear distribution protein nudE homolog 1">
    <location>
        <begin position="1"/>
        <end position="666"/>
    </location>
</feature>
<feature type="region of interest" description="Disordered" evidence="3">
    <location>
        <begin position="40"/>
        <end position="64"/>
    </location>
</feature>
<feature type="region of interest" description="Disordered" evidence="3">
    <location>
        <begin position="220"/>
        <end position="310"/>
    </location>
</feature>
<feature type="region of interest" description="Disordered" evidence="3">
    <location>
        <begin position="369"/>
        <end position="388"/>
    </location>
</feature>
<feature type="region of interest" description="Disordered" evidence="3">
    <location>
        <begin position="397"/>
        <end position="666"/>
    </location>
</feature>
<feature type="coiled-coil region" evidence="2">
    <location>
        <begin position="14"/>
        <end position="195"/>
    </location>
</feature>
<feature type="compositionally biased region" description="Polar residues" evidence="3">
    <location>
        <begin position="251"/>
        <end position="274"/>
    </location>
</feature>
<feature type="compositionally biased region" description="Low complexity" evidence="3">
    <location>
        <begin position="275"/>
        <end position="287"/>
    </location>
</feature>
<feature type="compositionally biased region" description="Low complexity" evidence="3">
    <location>
        <begin position="372"/>
        <end position="383"/>
    </location>
</feature>
<feature type="compositionally biased region" description="Polar residues" evidence="3">
    <location>
        <begin position="400"/>
        <end position="410"/>
    </location>
</feature>
<feature type="compositionally biased region" description="Low complexity" evidence="3">
    <location>
        <begin position="449"/>
        <end position="465"/>
    </location>
</feature>
<feature type="compositionally biased region" description="Low complexity" evidence="3">
    <location>
        <begin position="473"/>
        <end position="485"/>
    </location>
</feature>
<feature type="compositionally biased region" description="Low complexity" evidence="3">
    <location>
        <begin position="536"/>
        <end position="554"/>
    </location>
</feature>
<feature type="compositionally biased region" description="Polar residues" evidence="3">
    <location>
        <begin position="587"/>
        <end position="599"/>
    </location>
</feature>
<feature type="compositionally biased region" description="Polar residues" evidence="3">
    <location>
        <begin position="614"/>
        <end position="638"/>
    </location>
</feature>
<accession>P0CP38</accession>
<accession>Q55N49</accession>
<accession>Q5KBH9</accession>
<dbReference type="EMBL" id="AE017349">
    <property type="protein sequence ID" value="AAW45554.1"/>
    <property type="status" value="ALT_INIT"/>
    <property type="molecule type" value="Genomic_DNA"/>
</dbReference>
<dbReference type="RefSeq" id="XP_572861.1">
    <property type="nucleotide sequence ID" value="XM_572861.1"/>
</dbReference>
<dbReference type="SMR" id="P0CP38"/>
<dbReference type="STRING" id="214684.P0CP38"/>
<dbReference type="PaxDb" id="214684-P0CP38"/>
<dbReference type="EnsemblFungi" id="AAW45554">
    <property type="protein sequence ID" value="AAW45554"/>
    <property type="gene ID" value="CNI02480"/>
</dbReference>
<dbReference type="GeneID" id="3259703"/>
<dbReference type="KEGG" id="cne:CNI02480"/>
<dbReference type="eggNOG" id="KOG1853">
    <property type="taxonomic scope" value="Eukaryota"/>
</dbReference>
<dbReference type="InParanoid" id="P0CP38"/>
<dbReference type="OrthoDB" id="5877028at2759"/>
<dbReference type="Proteomes" id="UP000002149">
    <property type="component" value="Chromosome 9"/>
</dbReference>
<dbReference type="GO" id="GO:0005737">
    <property type="term" value="C:cytoplasm"/>
    <property type="evidence" value="ECO:0007669"/>
    <property type="project" value="UniProtKB-KW"/>
</dbReference>
<dbReference type="GO" id="GO:0005871">
    <property type="term" value="C:kinesin complex"/>
    <property type="evidence" value="ECO:0000318"/>
    <property type="project" value="GO_Central"/>
</dbReference>
<dbReference type="GO" id="GO:0000776">
    <property type="term" value="C:kinetochore"/>
    <property type="evidence" value="ECO:0000318"/>
    <property type="project" value="GO_Central"/>
</dbReference>
<dbReference type="GO" id="GO:0005874">
    <property type="term" value="C:microtubule"/>
    <property type="evidence" value="ECO:0007669"/>
    <property type="project" value="UniProtKB-KW"/>
</dbReference>
<dbReference type="GO" id="GO:0008017">
    <property type="term" value="F:microtubule binding"/>
    <property type="evidence" value="ECO:0000318"/>
    <property type="project" value="GO_Central"/>
</dbReference>
<dbReference type="GO" id="GO:0051642">
    <property type="term" value="P:centrosome localization"/>
    <property type="evidence" value="ECO:0000318"/>
    <property type="project" value="GO_Central"/>
</dbReference>
<dbReference type="GO" id="GO:0007059">
    <property type="term" value="P:chromosome segregation"/>
    <property type="evidence" value="ECO:0000318"/>
    <property type="project" value="GO_Central"/>
</dbReference>
<dbReference type="GO" id="GO:0051303">
    <property type="term" value="P:establishment of chromosome localization"/>
    <property type="evidence" value="ECO:0000318"/>
    <property type="project" value="GO_Central"/>
</dbReference>
<dbReference type="GO" id="GO:0000132">
    <property type="term" value="P:establishment of mitotic spindle orientation"/>
    <property type="evidence" value="ECO:0000318"/>
    <property type="project" value="GO_Central"/>
</dbReference>
<dbReference type="GO" id="GO:0007020">
    <property type="term" value="P:microtubule nucleation"/>
    <property type="evidence" value="ECO:0000318"/>
    <property type="project" value="GO_Central"/>
</dbReference>
<dbReference type="GO" id="GO:0047496">
    <property type="term" value="P:vesicle transport along microtubule"/>
    <property type="evidence" value="ECO:0000318"/>
    <property type="project" value="GO_Central"/>
</dbReference>
<dbReference type="Gene3D" id="6.10.250.1080">
    <property type="match status" value="1"/>
</dbReference>
<dbReference type="InterPro" id="IPR033494">
    <property type="entry name" value="NUDE"/>
</dbReference>
<dbReference type="InterPro" id="IPR006964">
    <property type="entry name" value="NUDE_dom"/>
</dbReference>
<dbReference type="PANTHER" id="PTHR10921:SF1">
    <property type="entry name" value="NUCLEAR DISTRIBUTION PROTEIN NUDE HOMOLOG"/>
    <property type="match status" value="1"/>
</dbReference>
<dbReference type="PANTHER" id="PTHR10921">
    <property type="entry name" value="NUCLEAR DISTRIBUTION PROTEIN NUDE HOMOLOG 1"/>
    <property type="match status" value="1"/>
</dbReference>
<dbReference type="Pfam" id="PF04880">
    <property type="entry name" value="NUDE_C"/>
    <property type="match status" value="1"/>
</dbReference>
<protein>
    <recommendedName>
        <fullName>Nuclear distribution protein nudE homolog 1</fullName>
    </recommendedName>
</protein>
<gene>
    <name type="primary">NDE1</name>
    <name type="ordered locus">CNI02480</name>
</gene>
<reference key="1">
    <citation type="journal article" date="2005" name="Science">
        <title>The genome of the basidiomycetous yeast and human pathogen Cryptococcus neoformans.</title>
        <authorList>
            <person name="Loftus B.J."/>
            <person name="Fung E."/>
            <person name="Roncaglia P."/>
            <person name="Rowley D."/>
            <person name="Amedeo P."/>
            <person name="Bruno D."/>
            <person name="Vamathevan J."/>
            <person name="Miranda M."/>
            <person name="Anderson I.J."/>
            <person name="Fraser J.A."/>
            <person name="Allen J.E."/>
            <person name="Bosdet I.E."/>
            <person name="Brent M.R."/>
            <person name="Chiu R."/>
            <person name="Doering T.L."/>
            <person name="Donlin M.J."/>
            <person name="D'Souza C.A."/>
            <person name="Fox D.S."/>
            <person name="Grinberg V."/>
            <person name="Fu J."/>
            <person name="Fukushima M."/>
            <person name="Haas B.J."/>
            <person name="Huang J.C."/>
            <person name="Janbon G."/>
            <person name="Jones S.J.M."/>
            <person name="Koo H.L."/>
            <person name="Krzywinski M.I."/>
            <person name="Kwon-Chung K.J."/>
            <person name="Lengeler K.B."/>
            <person name="Maiti R."/>
            <person name="Marra M.A."/>
            <person name="Marra R.E."/>
            <person name="Mathewson C.A."/>
            <person name="Mitchell T.G."/>
            <person name="Pertea M."/>
            <person name="Riggs F.R."/>
            <person name="Salzberg S.L."/>
            <person name="Schein J.E."/>
            <person name="Shvartsbeyn A."/>
            <person name="Shin H."/>
            <person name="Shumway M."/>
            <person name="Specht C.A."/>
            <person name="Suh B.B."/>
            <person name="Tenney A."/>
            <person name="Utterback T.R."/>
            <person name="Wickes B.L."/>
            <person name="Wortman J.R."/>
            <person name="Wye N.H."/>
            <person name="Kronstad J.W."/>
            <person name="Lodge J.K."/>
            <person name="Heitman J."/>
            <person name="Davis R.W."/>
            <person name="Fraser C.M."/>
            <person name="Hyman R.W."/>
        </authorList>
    </citation>
    <scope>NUCLEOTIDE SEQUENCE [LARGE SCALE GENOMIC DNA]</scope>
    <source>
        <strain>JEC21 / ATCC MYA-565</strain>
    </source>
</reference>
<name>NDE1_CRYNJ</name>
<comment type="function">
    <text evidence="1">Required for nuclear migration.</text>
</comment>
<comment type="subunit">
    <text evidence="1">Self-associates. Interacts with PAC1 (By similarity).</text>
</comment>
<comment type="subcellular location">
    <subcellularLocation>
        <location>Cytoplasm</location>
        <location>Cytoskeleton</location>
    </subcellularLocation>
    <text evidence="1">Localizes to the plus ends of microtubules.</text>
</comment>
<comment type="similarity">
    <text evidence="4">Belongs to the nudE family.</text>
</comment>
<comment type="sequence caution" evidence="4">
    <conflict type="erroneous initiation">
        <sequence resource="EMBL-CDS" id="AAW45554"/>
    </conflict>
    <text>Extended N-terminus.</text>
</comment>
<proteinExistence type="inferred from homology"/>
<organism>
    <name type="scientific">Cryptococcus neoformans var. neoformans serotype D (strain JEC21 / ATCC MYA-565)</name>
    <name type="common">Filobasidiella neoformans</name>
    <dbReference type="NCBI Taxonomy" id="214684"/>
    <lineage>
        <taxon>Eukaryota</taxon>
        <taxon>Fungi</taxon>
        <taxon>Dikarya</taxon>
        <taxon>Basidiomycota</taxon>
        <taxon>Agaricomycotina</taxon>
        <taxon>Tremellomycetes</taxon>
        <taxon>Tremellales</taxon>
        <taxon>Cryptococcaceae</taxon>
        <taxon>Cryptococcus</taxon>
        <taxon>Cryptococcus neoformans species complex</taxon>
    </lineage>
</organism>
<keyword id="KW-0175">Coiled coil</keyword>
<keyword id="KW-0963">Cytoplasm</keyword>
<keyword id="KW-0206">Cytoskeleton</keyword>
<keyword id="KW-0493">Microtubule</keyword>
<keyword id="KW-1185">Reference proteome</keyword>
<keyword id="KW-0813">Transport</keyword>